<organism>
    <name type="scientific">Roseiflexus sp. (strain RS-1)</name>
    <dbReference type="NCBI Taxonomy" id="357808"/>
    <lineage>
        <taxon>Bacteria</taxon>
        <taxon>Bacillati</taxon>
        <taxon>Chloroflexota</taxon>
        <taxon>Chloroflexia</taxon>
        <taxon>Chloroflexales</taxon>
        <taxon>Roseiflexineae</taxon>
        <taxon>Roseiflexaceae</taxon>
        <taxon>Roseiflexus</taxon>
    </lineage>
</organism>
<sequence>MAKQAAKGSAAATKRQRGKRREKKNVPRGQAHIQSTFNNTIVTITDPAGNVICWSSAGQNGFKGSRKSTPYAAQVAAENAARKAMENGMRQVEVFVKGPGAGREAAIRSLQAAGLQVTAITDVTPIPHNGCRPPKRRRV</sequence>
<accession>A5USG4</accession>
<gene>
    <name evidence="1" type="primary">rpsK</name>
    <name type="ordered locus">RoseRS_1160</name>
</gene>
<comment type="function">
    <text evidence="1">Located on the platform of the 30S subunit, it bridges several disparate RNA helices of the 16S rRNA. Forms part of the Shine-Dalgarno cleft in the 70S ribosome.</text>
</comment>
<comment type="subunit">
    <text evidence="1">Part of the 30S ribosomal subunit. Interacts with proteins S7 and S18. Binds to IF-3.</text>
</comment>
<comment type="similarity">
    <text evidence="1">Belongs to the universal ribosomal protein uS11 family.</text>
</comment>
<evidence type="ECO:0000255" key="1">
    <source>
        <dbReference type="HAMAP-Rule" id="MF_01310"/>
    </source>
</evidence>
<evidence type="ECO:0000256" key="2">
    <source>
        <dbReference type="SAM" id="MobiDB-lite"/>
    </source>
</evidence>
<evidence type="ECO:0000305" key="3"/>
<reference key="1">
    <citation type="submission" date="2007-04" db="EMBL/GenBank/DDBJ databases">
        <title>Complete sequence of Roseiflexus sp. RS-1.</title>
        <authorList>
            <consortium name="US DOE Joint Genome Institute"/>
            <person name="Copeland A."/>
            <person name="Lucas S."/>
            <person name="Lapidus A."/>
            <person name="Barry K."/>
            <person name="Detter J.C."/>
            <person name="Glavina del Rio T."/>
            <person name="Hammon N."/>
            <person name="Israni S."/>
            <person name="Dalin E."/>
            <person name="Tice H."/>
            <person name="Pitluck S."/>
            <person name="Chertkov O."/>
            <person name="Brettin T."/>
            <person name="Bruce D."/>
            <person name="Han C."/>
            <person name="Schmutz J."/>
            <person name="Larimer F."/>
            <person name="Land M."/>
            <person name="Hauser L."/>
            <person name="Kyrpides N."/>
            <person name="Mikhailova N."/>
            <person name="Bryant D.A."/>
            <person name="Richardson P."/>
        </authorList>
    </citation>
    <scope>NUCLEOTIDE SEQUENCE [LARGE SCALE GENOMIC DNA]</scope>
    <source>
        <strain>RS-1</strain>
    </source>
</reference>
<proteinExistence type="inferred from homology"/>
<dbReference type="EMBL" id="CP000686">
    <property type="protein sequence ID" value="ABQ89567.1"/>
    <property type="molecule type" value="Genomic_DNA"/>
</dbReference>
<dbReference type="RefSeq" id="WP_011955920.1">
    <property type="nucleotide sequence ID" value="NC_009523.1"/>
</dbReference>
<dbReference type="SMR" id="A5USG4"/>
<dbReference type="STRING" id="357808.RoseRS_1160"/>
<dbReference type="KEGG" id="rrs:RoseRS_1160"/>
<dbReference type="eggNOG" id="COG0100">
    <property type="taxonomic scope" value="Bacteria"/>
</dbReference>
<dbReference type="HOGENOM" id="CLU_072439_5_0_0"/>
<dbReference type="OrthoDB" id="9806415at2"/>
<dbReference type="Proteomes" id="UP000006554">
    <property type="component" value="Chromosome"/>
</dbReference>
<dbReference type="GO" id="GO:1990904">
    <property type="term" value="C:ribonucleoprotein complex"/>
    <property type="evidence" value="ECO:0007669"/>
    <property type="project" value="UniProtKB-KW"/>
</dbReference>
<dbReference type="GO" id="GO:0005840">
    <property type="term" value="C:ribosome"/>
    <property type="evidence" value="ECO:0007669"/>
    <property type="project" value="UniProtKB-KW"/>
</dbReference>
<dbReference type="GO" id="GO:0019843">
    <property type="term" value="F:rRNA binding"/>
    <property type="evidence" value="ECO:0007669"/>
    <property type="project" value="UniProtKB-UniRule"/>
</dbReference>
<dbReference type="GO" id="GO:0003735">
    <property type="term" value="F:structural constituent of ribosome"/>
    <property type="evidence" value="ECO:0007669"/>
    <property type="project" value="InterPro"/>
</dbReference>
<dbReference type="GO" id="GO:0006412">
    <property type="term" value="P:translation"/>
    <property type="evidence" value="ECO:0007669"/>
    <property type="project" value="UniProtKB-UniRule"/>
</dbReference>
<dbReference type="FunFam" id="3.30.420.80:FF:000001">
    <property type="entry name" value="30S ribosomal protein S11"/>
    <property type="match status" value="1"/>
</dbReference>
<dbReference type="Gene3D" id="3.30.420.80">
    <property type="entry name" value="Ribosomal protein S11"/>
    <property type="match status" value="1"/>
</dbReference>
<dbReference type="HAMAP" id="MF_01310">
    <property type="entry name" value="Ribosomal_uS11"/>
    <property type="match status" value="1"/>
</dbReference>
<dbReference type="InterPro" id="IPR001971">
    <property type="entry name" value="Ribosomal_uS11"/>
</dbReference>
<dbReference type="InterPro" id="IPR019981">
    <property type="entry name" value="Ribosomal_uS11_bac-type"/>
</dbReference>
<dbReference type="InterPro" id="IPR018102">
    <property type="entry name" value="Ribosomal_uS11_CS"/>
</dbReference>
<dbReference type="InterPro" id="IPR036967">
    <property type="entry name" value="Ribosomal_uS11_sf"/>
</dbReference>
<dbReference type="NCBIfam" id="NF003698">
    <property type="entry name" value="PRK05309.1"/>
    <property type="match status" value="1"/>
</dbReference>
<dbReference type="NCBIfam" id="TIGR03632">
    <property type="entry name" value="uS11_bact"/>
    <property type="match status" value="1"/>
</dbReference>
<dbReference type="PANTHER" id="PTHR11759">
    <property type="entry name" value="40S RIBOSOMAL PROTEIN S14/30S RIBOSOMAL PROTEIN S11"/>
    <property type="match status" value="1"/>
</dbReference>
<dbReference type="Pfam" id="PF00411">
    <property type="entry name" value="Ribosomal_S11"/>
    <property type="match status" value="1"/>
</dbReference>
<dbReference type="PIRSF" id="PIRSF002131">
    <property type="entry name" value="Ribosomal_S11"/>
    <property type="match status" value="1"/>
</dbReference>
<dbReference type="SUPFAM" id="SSF53137">
    <property type="entry name" value="Translational machinery components"/>
    <property type="match status" value="1"/>
</dbReference>
<dbReference type="PROSITE" id="PS00054">
    <property type="entry name" value="RIBOSOMAL_S11"/>
    <property type="match status" value="1"/>
</dbReference>
<feature type="chain" id="PRO_1000051852" description="Small ribosomal subunit protein uS11">
    <location>
        <begin position="1"/>
        <end position="139"/>
    </location>
</feature>
<feature type="region of interest" description="Disordered" evidence="2">
    <location>
        <begin position="1"/>
        <end position="30"/>
    </location>
</feature>
<feature type="compositionally biased region" description="Low complexity" evidence="2">
    <location>
        <begin position="1"/>
        <end position="13"/>
    </location>
</feature>
<feature type="compositionally biased region" description="Basic residues" evidence="2">
    <location>
        <begin position="14"/>
        <end position="23"/>
    </location>
</feature>
<name>RS11_ROSS1</name>
<protein>
    <recommendedName>
        <fullName evidence="1">Small ribosomal subunit protein uS11</fullName>
    </recommendedName>
    <alternativeName>
        <fullName evidence="3">30S ribosomal protein S11</fullName>
    </alternativeName>
</protein>
<keyword id="KW-0687">Ribonucleoprotein</keyword>
<keyword id="KW-0689">Ribosomal protein</keyword>
<keyword id="KW-0694">RNA-binding</keyword>
<keyword id="KW-0699">rRNA-binding</keyword>